<comment type="function">
    <text evidence="1">Plays a key role in glycolysis and gluconeogenesis.</text>
</comment>
<comment type="catalytic activity">
    <reaction evidence="2">
        <text>beta-D-fructose 1,6-bisphosphate = D-glyceraldehyde 3-phosphate + dihydroxyacetone phosphate</text>
        <dbReference type="Rhea" id="RHEA:14729"/>
        <dbReference type="ChEBI" id="CHEBI:32966"/>
        <dbReference type="ChEBI" id="CHEBI:57642"/>
        <dbReference type="ChEBI" id="CHEBI:59776"/>
        <dbReference type="EC" id="4.1.2.13"/>
    </reaction>
    <physiologicalReaction direction="left-to-right" evidence="2">
        <dbReference type="Rhea" id="RHEA:14730"/>
    </physiologicalReaction>
</comment>
<comment type="pathway">
    <text evidence="1">Carbohydrate degradation; glycolysis; D-glyceraldehyde 3-phosphate and glycerone phosphate from D-glucose: step 4/4.</text>
</comment>
<comment type="subunit">
    <text evidence="1">Tetramer.</text>
</comment>
<comment type="allergen">
    <text evidence="4">Causes an allergic reaction in human. Binds to IgE.</text>
</comment>
<comment type="miscellaneous">
    <text evidence="6">In vertebrates, three forms of this ubiquitous glycolytic enzyme are found, aldolase A in muscle, aldolase B in liver and aldolase C in brain.</text>
</comment>
<comment type="similarity">
    <text evidence="3">Belongs to the class I fructose-bisphosphate aldolase family.</text>
</comment>
<accession>B5DGM7</accession>
<accession>B5DGM8</accession>
<accession>B5DGM9</accession>
<accession>B5RIB3</accession>
<protein>
    <recommendedName>
        <fullName evidence="5">Fructose-bisphosphate aldolase A</fullName>
        <ecNumber evidence="1">4.1.2.13</ecNumber>
    </recommendedName>
    <alternativeName>
        <fullName evidence="1">Muscle-type aldolase</fullName>
    </alternativeName>
    <allergenName evidence="5">Sal s 3.0101</allergenName>
</protein>
<feature type="initiator methionine" description="Removed" evidence="4">
    <location>
        <position position="1"/>
    </location>
</feature>
<feature type="chain" id="PRO_0000425073" description="Fructose-bisphosphate aldolase A">
    <location>
        <begin position="2"/>
        <end position="363"/>
    </location>
</feature>
<feature type="active site" description="Proton acceptor" evidence="1">
    <location>
        <position position="188"/>
    </location>
</feature>
<feature type="active site" description="Schiff-base intermediate with dihydroxyacetone-P" evidence="1">
    <location>
        <position position="230"/>
    </location>
</feature>
<feature type="binding site" evidence="1">
    <location>
        <position position="43"/>
    </location>
    <ligand>
        <name>beta-D-fructose 1,6-bisphosphate</name>
        <dbReference type="ChEBI" id="CHEBI:32966"/>
    </ligand>
</feature>
<feature type="binding site" evidence="1">
    <location>
        <begin position="272"/>
        <end position="274"/>
    </location>
    <ligand>
        <name>beta-D-fructose 1,6-bisphosphate</name>
        <dbReference type="ChEBI" id="CHEBI:32966"/>
    </ligand>
</feature>
<feature type="binding site" evidence="1">
    <location>
        <position position="301"/>
    </location>
    <ligand>
        <name>beta-D-fructose 1,6-bisphosphate</name>
        <dbReference type="ChEBI" id="CHEBI:32966"/>
    </ligand>
</feature>
<feature type="binding site" evidence="1">
    <location>
        <position position="304"/>
    </location>
    <ligand>
        <name>beta-D-fructose 1,6-bisphosphate</name>
        <dbReference type="ChEBI" id="CHEBI:32966"/>
    </ligand>
</feature>
<feature type="site" description="Necessary for preference for fructose 1,6-bisphosphate over fructose 1-phosphate" evidence="1">
    <location>
        <position position="363"/>
    </location>
</feature>
<reference evidence="7" key="1">
    <citation type="journal article" date="2009" name="BMC Genomics">
        <title>Characterization of full-length sequenced cDNA inserts (FLIcs) from Atlantic salmon (Salmo salar).</title>
        <authorList>
            <person name="Andreassen R."/>
            <person name="Lunner S."/>
            <person name="Hoyheim B."/>
        </authorList>
    </citation>
    <scope>NUCLEOTIDE SEQUENCE [MRNA]</scope>
    <source>
        <tissue evidence="7">White muscle</tissue>
    </source>
</reference>
<reference evidence="6" key="2">
    <citation type="journal article" date="2013" name="Clin. Exp. Allergy">
        <title>Identification of enolases and aldolases as important fish allergens in cod, salmon and tuna: component resolved diagnosis using parvalbumin and the new allergens.</title>
        <authorList>
            <person name="Kuehn A."/>
            <person name="Hilger C."/>
            <person name="Lehners-Weber C."/>
            <person name="Codreanu-Morel F."/>
            <person name="Morisset M."/>
            <person name="Metz-Favre C."/>
            <person name="Pauli G."/>
            <person name="de Blay F."/>
            <person name="Revets D."/>
            <person name="Muller C.P."/>
            <person name="Vogel L."/>
            <person name="Vieths S."/>
            <person name="Hentges F."/>
        </authorList>
    </citation>
    <scope>PROTEIN SEQUENCE OF 2-14 AND 323-331</scope>
    <scope>ALLERGEN</scope>
    <scope>IDENTIFICATION BY MASS SPECTROMETRY</scope>
    <source>
        <tissue evidence="4">Muscle</tissue>
    </source>
</reference>
<organism>
    <name type="scientific">Salmo salar</name>
    <name type="common">Atlantic salmon</name>
    <dbReference type="NCBI Taxonomy" id="8030"/>
    <lineage>
        <taxon>Eukaryota</taxon>
        <taxon>Metazoa</taxon>
        <taxon>Chordata</taxon>
        <taxon>Craniata</taxon>
        <taxon>Vertebrata</taxon>
        <taxon>Euteleostomi</taxon>
        <taxon>Actinopterygii</taxon>
        <taxon>Neopterygii</taxon>
        <taxon>Teleostei</taxon>
        <taxon>Protacanthopterygii</taxon>
        <taxon>Salmoniformes</taxon>
        <taxon>Salmonidae</taxon>
        <taxon>Salmoninae</taxon>
        <taxon>Salmo</taxon>
    </lineage>
</organism>
<name>ALDOA_SALSA</name>
<keyword id="KW-0020">Allergen</keyword>
<keyword id="KW-0903">Direct protein sequencing</keyword>
<keyword id="KW-0324">Glycolysis</keyword>
<keyword id="KW-0456">Lyase</keyword>
<keyword id="KW-1185">Reference proteome</keyword>
<keyword id="KW-0704">Schiff base</keyword>
<evidence type="ECO:0000250" key="1">
    <source>
        <dbReference type="UniProtKB" id="P00883"/>
    </source>
</evidence>
<evidence type="ECO:0000250" key="2">
    <source>
        <dbReference type="UniProtKB" id="P04075"/>
    </source>
</evidence>
<evidence type="ECO:0000255" key="3"/>
<evidence type="ECO:0000269" key="4">
    <source>
    </source>
</evidence>
<evidence type="ECO:0000303" key="5">
    <source>
    </source>
</evidence>
<evidence type="ECO:0000305" key="6"/>
<evidence type="ECO:0000312" key="7">
    <source>
        <dbReference type="EMBL" id="ACH70901.1"/>
    </source>
</evidence>
<dbReference type="EC" id="4.1.2.13" evidence="1"/>
<dbReference type="EMBL" id="BT043786">
    <property type="protein sequence ID" value="ACH70901.1"/>
    <property type="molecule type" value="mRNA"/>
</dbReference>
<dbReference type="EMBL" id="BT043787">
    <property type="protein sequence ID" value="ACH70902.1"/>
    <property type="molecule type" value="mRNA"/>
</dbReference>
<dbReference type="EMBL" id="BT043788">
    <property type="protein sequence ID" value="ACH70903.1"/>
    <property type="molecule type" value="mRNA"/>
</dbReference>
<dbReference type="EMBL" id="BT043789">
    <property type="protein sequence ID" value="ACH70904.1"/>
    <property type="molecule type" value="mRNA"/>
</dbReference>
<dbReference type="EMBL" id="BT044037">
    <property type="protein sequence ID" value="ACH85353.1"/>
    <property type="molecule type" value="mRNA"/>
</dbReference>
<dbReference type="RefSeq" id="NP_001133180.1">
    <property type="nucleotide sequence ID" value="NM_001139708.1"/>
</dbReference>
<dbReference type="RefSeq" id="NP_001133181.1">
    <property type="nucleotide sequence ID" value="NM_001139709.1"/>
</dbReference>
<dbReference type="RefSeq" id="XP_014014713.1">
    <property type="nucleotide sequence ID" value="XM_014159238.2"/>
</dbReference>
<dbReference type="RefSeq" id="XP_014014714.1">
    <property type="nucleotide sequence ID" value="XM_014159239.2"/>
</dbReference>
<dbReference type="SMR" id="B5DGM7"/>
<dbReference type="STRING" id="8030.ENSSSAP00000045746"/>
<dbReference type="Allergome" id="10151">
    <property type="allergen name" value="Sal s 3"/>
</dbReference>
<dbReference type="Allergome" id="10152">
    <property type="allergen name" value="Sal s 3.0101"/>
</dbReference>
<dbReference type="PaxDb" id="8030-ENSSSAP00000045746"/>
<dbReference type="Ensembl" id="ENSSSAT00070022288">
    <property type="protein sequence ID" value="ENSSSAP00070021269"/>
    <property type="gene ID" value="ENSSSAG00070013994"/>
</dbReference>
<dbReference type="GeneID" id="100194623"/>
<dbReference type="GeneID" id="100194624"/>
<dbReference type="KEGG" id="sasa:100194623"/>
<dbReference type="KEGG" id="sasa:100194624"/>
<dbReference type="OrthoDB" id="173166at7898"/>
<dbReference type="UniPathway" id="UPA00109">
    <property type="reaction ID" value="UER00183"/>
</dbReference>
<dbReference type="Proteomes" id="UP000087266">
    <property type="component" value="Chromosome ssa19"/>
</dbReference>
<dbReference type="Bgee" id="ENSSSAG00000047233">
    <property type="expression patterns" value="Expressed in muscle tissue and 18 other cell types or tissues"/>
</dbReference>
<dbReference type="GO" id="GO:0004332">
    <property type="term" value="F:fructose-bisphosphate aldolase activity"/>
    <property type="evidence" value="ECO:0007669"/>
    <property type="project" value="UniProtKB-EC"/>
</dbReference>
<dbReference type="GO" id="GO:0006096">
    <property type="term" value="P:glycolytic process"/>
    <property type="evidence" value="ECO:0007669"/>
    <property type="project" value="UniProtKB-UniPathway"/>
</dbReference>
<dbReference type="CDD" id="cd00948">
    <property type="entry name" value="FBP_aldolase_I_a"/>
    <property type="match status" value="1"/>
</dbReference>
<dbReference type="FunFam" id="3.20.20.70:FF:000021">
    <property type="entry name" value="Fructose-bisphosphate aldolase"/>
    <property type="match status" value="1"/>
</dbReference>
<dbReference type="Gene3D" id="3.20.20.70">
    <property type="entry name" value="Aldolase class I"/>
    <property type="match status" value="1"/>
</dbReference>
<dbReference type="InterPro" id="IPR029768">
    <property type="entry name" value="Aldolase_I_AS"/>
</dbReference>
<dbReference type="InterPro" id="IPR013785">
    <property type="entry name" value="Aldolase_TIM"/>
</dbReference>
<dbReference type="InterPro" id="IPR000741">
    <property type="entry name" value="FBA_I"/>
</dbReference>
<dbReference type="NCBIfam" id="NF033379">
    <property type="entry name" value="FrucBisAld_I"/>
    <property type="match status" value="1"/>
</dbReference>
<dbReference type="PANTHER" id="PTHR11627">
    <property type="entry name" value="FRUCTOSE-BISPHOSPHATE ALDOLASE"/>
    <property type="match status" value="1"/>
</dbReference>
<dbReference type="Pfam" id="PF00274">
    <property type="entry name" value="Glycolytic"/>
    <property type="match status" value="1"/>
</dbReference>
<dbReference type="SUPFAM" id="SSF51569">
    <property type="entry name" value="Aldolase"/>
    <property type="match status" value="1"/>
</dbReference>
<dbReference type="PROSITE" id="PS00158">
    <property type="entry name" value="ALDOLASE_CLASS_I"/>
    <property type="match status" value="1"/>
</dbReference>
<sequence length="363" mass="39556">MPHAFPFLTPDQKKELSDIALKIVAKGKGILAADESTGSVAKRFQSINTENTEENRRLYRQLLFTADDRAGPCIGGVIFFHETLYQKTDAGKTFPEHVKSRGWVVGIKVDKGVVPLAGTNGETTTQGLDGLYERCAQYKKDGCDFAKWRCVLKITSTTPSRLAIMENCNVLARYASICQMHGIVPIVEPEILPDGDHDLKRTQYVTEKVLAAMYKALSDHHVYLEGTLLKPNMVTAGHSCSHKYTHQEIAMATVTALRRTVPPAVPGVTFLSGGQSEEEASINLNVMNQCPLHRPWALTFSYGRALQASALKAWGGKPGNGKAAQEEFIKRALANSLACQGKYVASGDSAAAGDSLFVANHAY</sequence>
<proteinExistence type="evidence at protein level"/>